<evidence type="ECO:0000255" key="1">
    <source>
        <dbReference type="HAMAP-Rule" id="MF_00159"/>
    </source>
</evidence>
<feature type="chain" id="PRO_1000011472" description="4-hydroxy-3-methylbut-2-en-1-yl diphosphate synthase (flavodoxin)">
    <location>
        <begin position="1"/>
        <end position="368"/>
    </location>
</feature>
<feature type="binding site" evidence="1">
    <location>
        <position position="271"/>
    </location>
    <ligand>
        <name>[4Fe-4S] cluster</name>
        <dbReference type="ChEBI" id="CHEBI:49883"/>
    </ligand>
</feature>
<feature type="binding site" evidence="1">
    <location>
        <position position="274"/>
    </location>
    <ligand>
        <name>[4Fe-4S] cluster</name>
        <dbReference type="ChEBI" id="CHEBI:49883"/>
    </ligand>
</feature>
<feature type="binding site" evidence="1">
    <location>
        <position position="306"/>
    </location>
    <ligand>
        <name>[4Fe-4S] cluster</name>
        <dbReference type="ChEBI" id="CHEBI:49883"/>
    </ligand>
</feature>
<feature type="binding site" evidence="1">
    <location>
        <position position="313"/>
    </location>
    <ligand>
        <name>[4Fe-4S] cluster</name>
        <dbReference type="ChEBI" id="CHEBI:49883"/>
    </ligand>
</feature>
<dbReference type="EC" id="1.17.7.3" evidence="1"/>
<dbReference type="EMBL" id="CP000436">
    <property type="protein sequence ID" value="ABI24682.1"/>
    <property type="molecule type" value="Genomic_DNA"/>
</dbReference>
<dbReference type="SMR" id="Q0I2E9"/>
<dbReference type="KEGG" id="hso:HS_0404"/>
<dbReference type="eggNOG" id="COG0821">
    <property type="taxonomic scope" value="Bacteria"/>
</dbReference>
<dbReference type="HOGENOM" id="CLU_042258_0_0_6"/>
<dbReference type="UniPathway" id="UPA00056">
    <property type="reaction ID" value="UER00096"/>
</dbReference>
<dbReference type="GO" id="GO:0051539">
    <property type="term" value="F:4 iron, 4 sulfur cluster binding"/>
    <property type="evidence" value="ECO:0007669"/>
    <property type="project" value="UniProtKB-UniRule"/>
</dbReference>
<dbReference type="GO" id="GO:0046429">
    <property type="term" value="F:4-hydroxy-3-methylbut-2-en-1-yl diphosphate synthase activity (ferredoxin)"/>
    <property type="evidence" value="ECO:0007669"/>
    <property type="project" value="UniProtKB-UniRule"/>
</dbReference>
<dbReference type="GO" id="GO:0141197">
    <property type="term" value="F:4-hydroxy-3-methylbut-2-enyl-diphosphate synthase activity (flavodoxin)"/>
    <property type="evidence" value="ECO:0007669"/>
    <property type="project" value="UniProtKB-EC"/>
</dbReference>
<dbReference type="GO" id="GO:0005506">
    <property type="term" value="F:iron ion binding"/>
    <property type="evidence" value="ECO:0007669"/>
    <property type="project" value="InterPro"/>
</dbReference>
<dbReference type="GO" id="GO:0019288">
    <property type="term" value="P:isopentenyl diphosphate biosynthetic process, methylerythritol 4-phosphate pathway"/>
    <property type="evidence" value="ECO:0007669"/>
    <property type="project" value="UniProtKB-UniRule"/>
</dbReference>
<dbReference type="GO" id="GO:0016114">
    <property type="term" value="P:terpenoid biosynthetic process"/>
    <property type="evidence" value="ECO:0007669"/>
    <property type="project" value="InterPro"/>
</dbReference>
<dbReference type="FunFam" id="3.20.20.20:FF:000001">
    <property type="entry name" value="4-hydroxy-3-methylbut-2-en-1-yl diphosphate synthase (flavodoxin)"/>
    <property type="match status" value="1"/>
</dbReference>
<dbReference type="FunFam" id="3.30.413.10:FF:000002">
    <property type="entry name" value="4-hydroxy-3-methylbut-2-en-1-yl diphosphate synthase (flavodoxin)"/>
    <property type="match status" value="1"/>
</dbReference>
<dbReference type="Gene3D" id="3.20.20.20">
    <property type="entry name" value="Dihydropteroate synthase-like"/>
    <property type="match status" value="1"/>
</dbReference>
<dbReference type="Gene3D" id="3.30.413.10">
    <property type="entry name" value="Sulfite Reductase Hemoprotein, domain 1"/>
    <property type="match status" value="1"/>
</dbReference>
<dbReference type="HAMAP" id="MF_00159">
    <property type="entry name" value="IspG"/>
    <property type="match status" value="1"/>
</dbReference>
<dbReference type="InterPro" id="IPR011005">
    <property type="entry name" value="Dihydropteroate_synth-like_sf"/>
</dbReference>
<dbReference type="InterPro" id="IPR016425">
    <property type="entry name" value="IspG_bac"/>
</dbReference>
<dbReference type="InterPro" id="IPR004588">
    <property type="entry name" value="IspG_bac-typ"/>
</dbReference>
<dbReference type="InterPro" id="IPR045854">
    <property type="entry name" value="NO2/SO3_Rdtase_4Fe4S_sf"/>
</dbReference>
<dbReference type="NCBIfam" id="TIGR00612">
    <property type="entry name" value="ispG_gcpE"/>
    <property type="match status" value="1"/>
</dbReference>
<dbReference type="NCBIfam" id="NF001540">
    <property type="entry name" value="PRK00366.1"/>
    <property type="match status" value="1"/>
</dbReference>
<dbReference type="PANTHER" id="PTHR30454">
    <property type="entry name" value="4-HYDROXY-3-METHYLBUT-2-EN-1-YL DIPHOSPHATE SYNTHASE"/>
    <property type="match status" value="1"/>
</dbReference>
<dbReference type="PANTHER" id="PTHR30454:SF0">
    <property type="entry name" value="4-HYDROXY-3-METHYLBUT-2-EN-1-YL DIPHOSPHATE SYNTHASE (FERREDOXIN), CHLOROPLASTIC"/>
    <property type="match status" value="1"/>
</dbReference>
<dbReference type="Pfam" id="PF04551">
    <property type="entry name" value="GcpE"/>
    <property type="match status" value="1"/>
</dbReference>
<dbReference type="PIRSF" id="PIRSF004640">
    <property type="entry name" value="IspG"/>
    <property type="match status" value="1"/>
</dbReference>
<dbReference type="SUPFAM" id="SSF51717">
    <property type="entry name" value="Dihydropteroate synthetase-like"/>
    <property type="match status" value="1"/>
</dbReference>
<dbReference type="SUPFAM" id="SSF56014">
    <property type="entry name" value="Nitrite and sulphite reductase 4Fe-4S domain-like"/>
    <property type="match status" value="1"/>
</dbReference>
<gene>
    <name evidence="1" type="primary">ispG</name>
    <name type="ordered locus">HS_0404</name>
</gene>
<name>ISPG_HISS1</name>
<keyword id="KW-0004">4Fe-4S</keyword>
<keyword id="KW-0408">Iron</keyword>
<keyword id="KW-0411">Iron-sulfur</keyword>
<keyword id="KW-0414">Isoprene biosynthesis</keyword>
<keyword id="KW-0479">Metal-binding</keyword>
<keyword id="KW-0560">Oxidoreductase</keyword>
<reference key="1">
    <citation type="journal article" date="2007" name="J. Bacteriol.">
        <title>Complete genome sequence of Haemophilus somnus (Histophilus somni) strain 129Pt and comparison to Haemophilus ducreyi 35000HP and Haemophilus influenzae Rd.</title>
        <authorList>
            <person name="Challacombe J.F."/>
            <person name="Duncan A.J."/>
            <person name="Brettin T.S."/>
            <person name="Bruce D."/>
            <person name="Chertkov O."/>
            <person name="Detter J.C."/>
            <person name="Han C.S."/>
            <person name="Misra M."/>
            <person name="Richardson P."/>
            <person name="Tapia R."/>
            <person name="Thayer N."/>
            <person name="Xie G."/>
            <person name="Inzana T.J."/>
        </authorList>
    </citation>
    <scope>NUCLEOTIDE SEQUENCE [LARGE SCALE GENOMIC DNA]</scope>
    <source>
        <strain>129Pt</strain>
    </source>
</reference>
<proteinExistence type="inferred from homology"/>
<protein>
    <recommendedName>
        <fullName evidence="1">4-hydroxy-3-methylbut-2-en-1-yl diphosphate synthase (flavodoxin)</fullName>
        <ecNumber evidence="1">1.17.7.3</ecNumber>
    </recommendedName>
    <alternativeName>
        <fullName evidence="1">1-hydroxy-2-methyl-2-(E)-butenyl 4-diphosphate synthase</fullName>
    </alternativeName>
</protein>
<sequence>MSSFKPTINRRQSTKIYVGNVPIGGDAPIAVQSMTNTRTTDIEATVAQIKALERVGADIVRISVPTMDAAEAFKSIKQQVNIPLVADIHFDYRIALKVAEYGVDCLRINPGNIGREDRIRAVVDCAKDKNIPIRIGVNAGSLEKDLQEKYGEPTPEALLESALRHVEILDRLNFDQFKVSVKASDVFLAVESYRLLAKAIKQPLHLGITEAGGARAGAVKSAVGLGMLLAEGIGDTLRVSLAADPVEEIKVGFDILKSLRIRSHGINFIACPTCSRQEFDVIGTVNALEQRLEDIVTPMDVSIIGCVVNGPGEALISDLGVTGGNKKSGYYLDGKRQKERFDNEDLINQLEAKIRAKVAQQDPKNRII</sequence>
<comment type="function">
    <text evidence="1">Converts 2C-methyl-D-erythritol 2,4-cyclodiphosphate (ME-2,4cPP) into 1-hydroxy-2-methyl-2-(E)-butenyl 4-diphosphate.</text>
</comment>
<comment type="catalytic activity">
    <reaction evidence="1">
        <text>(2E)-4-hydroxy-3-methylbut-2-enyl diphosphate + oxidized [flavodoxin] + H2O + 2 H(+) = 2-C-methyl-D-erythritol 2,4-cyclic diphosphate + reduced [flavodoxin]</text>
        <dbReference type="Rhea" id="RHEA:43604"/>
        <dbReference type="Rhea" id="RHEA-COMP:10622"/>
        <dbReference type="Rhea" id="RHEA-COMP:10623"/>
        <dbReference type="ChEBI" id="CHEBI:15377"/>
        <dbReference type="ChEBI" id="CHEBI:15378"/>
        <dbReference type="ChEBI" id="CHEBI:57618"/>
        <dbReference type="ChEBI" id="CHEBI:58210"/>
        <dbReference type="ChEBI" id="CHEBI:58483"/>
        <dbReference type="ChEBI" id="CHEBI:128753"/>
        <dbReference type="EC" id="1.17.7.3"/>
    </reaction>
</comment>
<comment type="cofactor">
    <cofactor evidence="1">
        <name>[4Fe-4S] cluster</name>
        <dbReference type="ChEBI" id="CHEBI:49883"/>
    </cofactor>
    <text evidence="1">Binds 1 [4Fe-4S] cluster.</text>
</comment>
<comment type="pathway">
    <text evidence="1">Isoprenoid biosynthesis; isopentenyl diphosphate biosynthesis via DXP pathway; isopentenyl diphosphate from 1-deoxy-D-xylulose 5-phosphate: step 5/6.</text>
</comment>
<comment type="similarity">
    <text evidence="1">Belongs to the IspG family.</text>
</comment>
<organism>
    <name type="scientific">Histophilus somni (strain 129Pt)</name>
    <name type="common">Haemophilus somnus</name>
    <dbReference type="NCBI Taxonomy" id="205914"/>
    <lineage>
        <taxon>Bacteria</taxon>
        <taxon>Pseudomonadati</taxon>
        <taxon>Pseudomonadota</taxon>
        <taxon>Gammaproteobacteria</taxon>
        <taxon>Pasteurellales</taxon>
        <taxon>Pasteurellaceae</taxon>
        <taxon>Histophilus</taxon>
    </lineage>
</organism>
<accession>Q0I2E9</accession>